<keyword id="KW-0027">Amidation</keyword>
<keyword id="KW-0878">Amphibian defense peptide</keyword>
<keyword id="KW-0044">Antibiotic</keyword>
<keyword id="KW-0929">Antimicrobial</keyword>
<keyword id="KW-0903">Direct protein sequencing</keyword>
<keyword id="KW-0391">Immunity</keyword>
<keyword id="KW-0399">Innate immunity</keyword>
<keyword id="KW-0472">Membrane</keyword>
<keyword id="KW-0964">Secreted</keyword>
<keyword id="KW-1052">Target cell membrane</keyword>
<keyword id="KW-1053">Target membrane</keyword>
<proteinExistence type="evidence at protein level"/>
<evidence type="ECO:0000269" key="1">
    <source>
    </source>
</evidence>
<evidence type="ECO:0000303" key="2">
    <source>
    </source>
</evidence>
<evidence type="ECO:0000305" key="3"/>
<evidence type="ECO:0000305" key="4">
    <source>
    </source>
</evidence>
<accession>P0DTM1</accession>
<comment type="function">
    <text evidence="1">Antibacterial peptide. Has activity against the Gram-positive bacterium S.aureus (MIC=8 uM) and the Gram-negative bacterium E.coli (MIC=128 uM). Has a moderate hemolytic activity (LC(50)=95 uM).</text>
</comment>
<comment type="subcellular location">
    <subcellularLocation>
        <location evidence="1">Secreted</location>
    </subcellularLocation>
    <subcellularLocation>
        <location evidence="3">Target cell membrane</location>
    </subcellularLocation>
</comment>
<comment type="tissue specificity">
    <text evidence="4">Expressed by the skin glands.</text>
</comment>
<comment type="mass spectrometry" mass="1382.0" method="MALDI" evidence="1"/>
<comment type="similarity">
    <text evidence="3">Belongs to the frog skin active peptide (FSAP) family. Temporin subfamily.</text>
</comment>
<name>TP1B_RANCS</name>
<organism>
    <name type="scientific">Rana cascadae</name>
    <name type="common">Cascades frog</name>
    <dbReference type="NCBI Taxonomy" id="160497"/>
    <lineage>
        <taxon>Eukaryota</taxon>
        <taxon>Metazoa</taxon>
        <taxon>Chordata</taxon>
        <taxon>Craniata</taxon>
        <taxon>Vertebrata</taxon>
        <taxon>Euteleostomi</taxon>
        <taxon>Amphibia</taxon>
        <taxon>Batrachia</taxon>
        <taxon>Anura</taxon>
        <taxon>Neobatrachia</taxon>
        <taxon>Ranoidea</taxon>
        <taxon>Ranidae</taxon>
        <taxon>Rana</taxon>
        <taxon>Rana</taxon>
    </lineage>
</organism>
<dbReference type="GO" id="GO:0005576">
    <property type="term" value="C:extracellular region"/>
    <property type="evidence" value="ECO:0007669"/>
    <property type="project" value="UniProtKB-SubCell"/>
</dbReference>
<dbReference type="GO" id="GO:0016020">
    <property type="term" value="C:membrane"/>
    <property type="evidence" value="ECO:0007669"/>
    <property type="project" value="UniProtKB-KW"/>
</dbReference>
<dbReference type="GO" id="GO:0044218">
    <property type="term" value="C:other organism cell membrane"/>
    <property type="evidence" value="ECO:0007669"/>
    <property type="project" value="UniProtKB-KW"/>
</dbReference>
<dbReference type="GO" id="GO:0042742">
    <property type="term" value="P:defense response to bacterium"/>
    <property type="evidence" value="ECO:0007669"/>
    <property type="project" value="UniProtKB-KW"/>
</dbReference>
<dbReference type="GO" id="GO:0045087">
    <property type="term" value="P:innate immune response"/>
    <property type="evidence" value="ECO:0007669"/>
    <property type="project" value="UniProtKB-KW"/>
</dbReference>
<reference key="1">
    <citation type="journal article" date="2007" name="Peptides">
        <title>Peptide defenses of the Cascades frog Rana cascadae: implications for the evolutionary history of frogs of the Amerana species group.</title>
        <authorList>
            <person name="Conlon J.M."/>
            <person name="Al-Dhaheri A."/>
            <person name="Al-Mutawa E."/>
            <person name="Al-Kharrge R."/>
            <person name="Ahmed E."/>
            <person name="Kolodziejek J."/>
            <person name="Nowotny N."/>
            <person name="Nielsen P.F."/>
            <person name="Davidson C."/>
        </authorList>
    </citation>
    <scope>PROTEIN SEQUENCE</scope>
    <scope>SUBCELLULAR LOCATION</scope>
    <scope>FUNCTION</scope>
    <scope>MASS SPECTROMETRY</scope>
    <scope>AMIDATION AT LEU-13</scope>
    <source>
        <tissue>Skin secretion</tissue>
    </source>
</reference>
<sequence length="13" mass="1384">FLPIIGKLLSGLL</sequence>
<feature type="peptide" id="PRO_0000457126" description="Temporin-1CSb" evidence="1">
    <location>
        <begin position="1"/>
        <end position="13"/>
    </location>
</feature>
<feature type="modified residue" description="Leucine amide" evidence="1">
    <location>
        <position position="13"/>
    </location>
</feature>
<protein>
    <recommendedName>
        <fullName evidence="2">Temporin-1CSb</fullName>
    </recommendedName>
</protein>